<name>ILVC_PHEZH</name>
<feature type="chain" id="PRO_1000124317" description="Ketol-acid reductoisomerase (NADP(+))">
    <location>
        <begin position="1"/>
        <end position="339"/>
    </location>
</feature>
<feature type="domain" description="KARI N-terminal Rossmann" evidence="2">
    <location>
        <begin position="1"/>
        <end position="182"/>
    </location>
</feature>
<feature type="domain" description="KARI C-terminal knotted" evidence="3">
    <location>
        <begin position="183"/>
        <end position="328"/>
    </location>
</feature>
<feature type="active site" evidence="1">
    <location>
        <position position="108"/>
    </location>
</feature>
<feature type="binding site" evidence="1">
    <location>
        <begin position="24"/>
        <end position="27"/>
    </location>
    <ligand>
        <name>NADP(+)</name>
        <dbReference type="ChEBI" id="CHEBI:58349"/>
    </ligand>
</feature>
<feature type="binding site" evidence="1">
    <location>
        <position position="48"/>
    </location>
    <ligand>
        <name>NADP(+)</name>
        <dbReference type="ChEBI" id="CHEBI:58349"/>
    </ligand>
</feature>
<feature type="binding site" evidence="1">
    <location>
        <position position="51"/>
    </location>
    <ligand>
        <name>NADP(+)</name>
        <dbReference type="ChEBI" id="CHEBI:58349"/>
    </ligand>
</feature>
<feature type="binding site" evidence="1">
    <location>
        <position position="53"/>
    </location>
    <ligand>
        <name>NADP(+)</name>
        <dbReference type="ChEBI" id="CHEBI:58349"/>
    </ligand>
</feature>
<feature type="binding site" evidence="1">
    <location>
        <begin position="83"/>
        <end position="86"/>
    </location>
    <ligand>
        <name>NADP(+)</name>
        <dbReference type="ChEBI" id="CHEBI:58349"/>
    </ligand>
</feature>
<feature type="binding site" evidence="1">
    <location>
        <position position="134"/>
    </location>
    <ligand>
        <name>NADP(+)</name>
        <dbReference type="ChEBI" id="CHEBI:58349"/>
    </ligand>
</feature>
<feature type="binding site" evidence="1">
    <location>
        <position position="191"/>
    </location>
    <ligand>
        <name>Mg(2+)</name>
        <dbReference type="ChEBI" id="CHEBI:18420"/>
        <label>1</label>
    </ligand>
</feature>
<feature type="binding site" evidence="1">
    <location>
        <position position="191"/>
    </location>
    <ligand>
        <name>Mg(2+)</name>
        <dbReference type="ChEBI" id="CHEBI:18420"/>
        <label>2</label>
    </ligand>
</feature>
<feature type="binding site" evidence="1">
    <location>
        <position position="195"/>
    </location>
    <ligand>
        <name>Mg(2+)</name>
        <dbReference type="ChEBI" id="CHEBI:18420"/>
        <label>1</label>
    </ligand>
</feature>
<feature type="binding site" evidence="1">
    <location>
        <position position="227"/>
    </location>
    <ligand>
        <name>Mg(2+)</name>
        <dbReference type="ChEBI" id="CHEBI:18420"/>
        <label>2</label>
    </ligand>
</feature>
<feature type="binding site" evidence="1">
    <location>
        <position position="231"/>
    </location>
    <ligand>
        <name>Mg(2+)</name>
        <dbReference type="ChEBI" id="CHEBI:18420"/>
        <label>2</label>
    </ligand>
</feature>
<feature type="binding site" evidence="1">
    <location>
        <position position="252"/>
    </location>
    <ligand>
        <name>substrate</name>
    </ligand>
</feature>
<evidence type="ECO:0000255" key="1">
    <source>
        <dbReference type="HAMAP-Rule" id="MF_00435"/>
    </source>
</evidence>
<evidence type="ECO:0000255" key="2">
    <source>
        <dbReference type="PROSITE-ProRule" id="PRU01197"/>
    </source>
</evidence>
<evidence type="ECO:0000255" key="3">
    <source>
        <dbReference type="PROSITE-ProRule" id="PRU01198"/>
    </source>
</evidence>
<gene>
    <name evidence="1" type="primary">ilvC</name>
    <name type="ordered locus">PHZ_c0777</name>
</gene>
<comment type="function">
    <text evidence="1">Involved in the biosynthesis of branched-chain amino acids (BCAA). Catalyzes an alkyl-migration followed by a ketol-acid reduction of (S)-2-acetolactate (S2AL) to yield (R)-2,3-dihydroxy-isovalerate. In the isomerase reaction, S2AL is rearranged via a Mg-dependent methyl migration to produce 3-hydroxy-3-methyl-2-ketobutyrate (HMKB). In the reductase reaction, this 2-ketoacid undergoes a metal-dependent reduction by NADPH to yield (R)-2,3-dihydroxy-isovalerate.</text>
</comment>
<comment type="catalytic activity">
    <reaction evidence="1">
        <text>(2R)-2,3-dihydroxy-3-methylbutanoate + NADP(+) = (2S)-2-acetolactate + NADPH + H(+)</text>
        <dbReference type="Rhea" id="RHEA:22068"/>
        <dbReference type="ChEBI" id="CHEBI:15378"/>
        <dbReference type="ChEBI" id="CHEBI:49072"/>
        <dbReference type="ChEBI" id="CHEBI:57783"/>
        <dbReference type="ChEBI" id="CHEBI:58349"/>
        <dbReference type="ChEBI" id="CHEBI:58476"/>
        <dbReference type="EC" id="1.1.1.86"/>
    </reaction>
</comment>
<comment type="catalytic activity">
    <reaction evidence="1">
        <text>(2R,3R)-2,3-dihydroxy-3-methylpentanoate + NADP(+) = (S)-2-ethyl-2-hydroxy-3-oxobutanoate + NADPH + H(+)</text>
        <dbReference type="Rhea" id="RHEA:13493"/>
        <dbReference type="ChEBI" id="CHEBI:15378"/>
        <dbReference type="ChEBI" id="CHEBI:49256"/>
        <dbReference type="ChEBI" id="CHEBI:49258"/>
        <dbReference type="ChEBI" id="CHEBI:57783"/>
        <dbReference type="ChEBI" id="CHEBI:58349"/>
        <dbReference type="EC" id="1.1.1.86"/>
    </reaction>
</comment>
<comment type="cofactor">
    <cofactor evidence="1">
        <name>Mg(2+)</name>
        <dbReference type="ChEBI" id="CHEBI:18420"/>
    </cofactor>
    <text evidence="1">Binds 2 magnesium ions per subunit.</text>
</comment>
<comment type="pathway">
    <text evidence="1">Amino-acid biosynthesis; L-isoleucine biosynthesis; L-isoleucine from 2-oxobutanoate: step 2/4.</text>
</comment>
<comment type="pathway">
    <text evidence="1">Amino-acid biosynthesis; L-valine biosynthesis; L-valine from pyruvate: step 2/4.</text>
</comment>
<comment type="similarity">
    <text evidence="1">Belongs to the ketol-acid reductoisomerase family.</text>
</comment>
<proteinExistence type="inferred from homology"/>
<dbReference type="EC" id="1.1.1.86" evidence="1"/>
<dbReference type="EMBL" id="CP000747">
    <property type="protein sequence ID" value="ACG77191.1"/>
    <property type="molecule type" value="Genomic_DNA"/>
</dbReference>
<dbReference type="RefSeq" id="WP_012521339.1">
    <property type="nucleotide sequence ID" value="NC_011144.1"/>
</dbReference>
<dbReference type="SMR" id="B4RG67"/>
<dbReference type="STRING" id="450851.PHZ_c0777"/>
<dbReference type="KEGG" id="pzu:PHZ_c0777"/>
<dbReference type="eggNOG" id="COG0059">
    <property type="taxonomic scope" value="Bacteria"/>
</dbReference>
<dbReference type="HOGENOM" id="CLU_033821_0_1_5"/>
<dbReference type="OrthoDB" id="9804088at2"/>
<dbReference type="UniPathway" id="UPA00047">
    <property type="reaction ID" value="UER00056"/>
</dbReference>
<dbReference type="UniPathway" id="UPA00049">
    <property type="reaction ID" value="UER00060"/>
</dbReference>
<dbReference type="Proteomes" id="UP000001868">
    <property type="component" value="Chromosome"/>
</dbReference>
<dbReference type="GO" id="GO:0005829">
    <property type="term" value="C:cytosol"/>
    <property type="evidence" value="ECO:0007669"/>
    <property type="project" value="TreeGrafter"/>
</dbReference>
<dbReference type="GO" id="GO:0004455">
    <property type="term" value="F:ketol-acid reductoisomerase activity"/>
    <property type="evidence" value="ECO:0007669"/>
    <property type="project" value="UniProtKB-UniRule"/>
</dbReference>
<dbReference type="GO" id="GO:0000287">
    <property type="term" value="F:magnesium ion binding"/>
    <property type="evidence" value="ECO:0007669"/>
    <property type="project" value="UniProtKB-UniRule"/>
</dbReference>
<dbReference type="GO" id="GO:0050661">
    <property type="term" value="F:NADP binding"/>
    <property type="evidence" value="ECO:0007669"/>
    <property type="project" value="InterPro"/>
</dbReference>
<dbReference type="GO" id="GO:0009097">
    <property type="term" value="P:isoleucine biosynthetic process"/>
    <property type="evidence" value="ECO:0007669"/>
    <property type="project" value="UniProtKB-UniRule"/>
</dbReference>
<dbReference type="GO" id="GO:0009099">
    <property type="term" value="P:L-valine biosynthetic process"/>
    <property type="evidence" value="ECO:0007669"/>
    <property type="project" value="UniProtKB-UniRule"/>
</dbReference>
<dbReference type="FunFam" id="3.40.50.720:FF:000023">
    <property type="entry name" value="Ketol-acid reductoisomerase (NADP(+))"/>
    <property type="match status" value="1"/>
</dbReference>
<dbReference type="Gene3D" id="6.10.240.10">
    <property type="match status" value="1"/>
</dbReference>
<dbReference type="Gene3D" id="3.40.50.720">
    <property type="entry name" value="NAD(P)-binding Rossmann-like Domain"/>
    <property type="match status" value="1"/>
</dbReference>
<dbReference type="HAMAP" id="MF_00435">
    <property type="entry name" value="IlvC"/>
    <property type="match status" value="1"/>
</dbReference>
<dbReference type="InterPro" id="IPR008927">
    <property type="entry name" value="6-PGluconate_DH-like_C_sf"/>
</dbReference>
<dbReference type="InterPro" id="IPR013023">
    <property type="entry name" value="KARI"/>
</dbReference>
<dbReference type="InterPro" id="IPR000506">
    <property type="entry name" value="KARI_C"/>
</dbReference>
<dbReference type="InterPro" id="IPR013116">
    <property type="entry name" value="KARI_N"/>
</dbReference>
<dbReference type="InterPro" id="IPR014359">
    <property type="entry name" value="KARI_prok"/>
</dbReference>
<dbReference type="InterPro" id="IPR036291">
    <property type="entry name" value="NAD(P)-bd_dom_sf"/>
</dbReference>
<dbReference type="NCBIfam" id="TIGR00465">
    <property type="entry name" value="ilvC"/>
    <property type="match status" value="1"/>
</dbReference>
<dbReference type="NCBIfam" id="NF004017">
    <property type="entry name" value="PRK05479.1"/>
    <property type="match status" value="1"/>
</dbReference>
<dbReference type="NCBIfam" id="NF009940">
    <property type="entry name" value="PRK13403.1"/>
    <property type="match status" value="1"/>
</dbReference>
<dbReference type="PANTHER" id="PTHR21371">
    <property type="entry name" value="KETOL-ACID REDUCTOISOMERASE, MITOCHONDRIAL"/>
    <property type="match status" value="1"/>
</dbReference>
<dbReference type="PANTHER" id="PTHR21371:SF1">
    <property type="entry name" value="KETOL-ACID REDUCTOISOMERASE, MITOCHONDRIAL"/>
    <property type="match status" value="1"/>
</dbReference>
<dbReference type="Pfam" id="PF01450">
    <property type="entry name" value="KARI_C"/>
    <property type="match status" value="1"/>
</dbReference>
<dbReference type="Pfam" id="PF07991">
    <property type="entry name" value="KARI_N"/>
    <property type="match status" value="1"/>
</dbReference>
<dbReference type="PIRSF" id="PIRSF000116">
    <property type="entry name" value="IlvC_gammaproteo"/>
    <property type="match status" value="1"/>
</dbReference>
<dbReference type="SUPFAM" id="SSF48179">
    <property type="entry name" value="6-phosphogluconate dehydrogenase C-terminal domain-like"/>
    <property type="match status" value="1"/>
</dbReference>
<dbReference type="SUPFAM" id="SSF51735">
    <property type="entry name" value="NAD(P)-binding Rossmann-fold domains"/>
    <property type="match status" value="1"/>
</dbReference>
<dbReference type="PROSITE" id="PS51851">
    <property type="entry name" value="KARI_C"/>
    <property type="match status" value="1"/>
</dbReference>
<dbReference type="PROSITE" id="PS51850">
    <property type="entry name" value="KARI_N"/>
    <property type="match status" value="1"/>
</dbReference>
<keyword id="KW-0028">Amino-acid biosynthesis</keyword>
<keyword id="KW-0100">Branched-chain amino acid biosynthesis</keyword>
<keyword id="KW-0460">Magnesium</keyword>
<keyword id="KW-0479">Metal-binding</keyword>
<keyword id="KW-0521">NADP</keyword>
<keyword id="KW-0560">Oxidoreductase</keyword>
<keyword id="KW-1185">Reference proteome</keyword>
<reference key="1">
    <citation type="journal article" date="2008" name="BMC Genomics">
        <title>Complete genome of Phenylobacterium zucineum - a novel facultative intracellular bacterium isolated from human erythroleukemia cell line K562.</title>
        <authorList>
            <person name="Luo Y."/>
            <person name="Xu X."/>
            <person name="Ding Z."/>
            <person name="Liu Z."/>
            <person name="Zhang B."/>
            <person name="Yan Z."/>
            <person name="Sun J."/>
            <person name="Hu S."/>
            <person name="Hu X."/>
        </authorList>
    </citation>
    <scope>NUCLEOTIDE SEQUENCE [LARGE SCALE GENOMIC DNA]</scope>
    <source>
        <strain>HLK1</strain>
    </source>
</reference>
<sequence length="339" mass="36775">MRVYYDRDADLSRILDKKIAIVGYGSQGRAHALNLVDSGVKNVAVALRPGSATAKKVEADGLKVMSVAEASAWADAIMILAPDELQAQIYRDEIAPNIKDGAALLFAHGLNVHFGLIEPKKTVDVLMVAPKGPGHTVRGEYQKGGGVPCLIAVHHDATGGAMDFGLAYASAIGGGRSGVIETNFREECETDLFGEQAVLCGGLVELIRAGFETLVEAGYAPEMAYFECLHEVKLIVDLIYEGGIANMNYSISNTAEYGEYVTGPRIVTSETKAEMKRVLEDIQSGRFVRDFMQENAVGAPSFKATRRRNAEHPIEEVGGRLRAMMPWITKNKLVDTERN</sequence>
<organism>
    <name type="scientific">Phenylobacterium zucineum (strain HLK1)</name>
    <dbReference type="NCBI Taxonomy" id="450851"/>
    <lineage>
        <taxon>Bacteria</taxon>
        <taxon>Pseudomonadati</taxon>
        <taxon>Pseudomonadota</taxon>
        <taxon>Alphaproteobacteria</taxon>
        <taxon>Caulobacterales</taxon>
        <taxon>Caulobacteraceae</taxon>
        <taxon>Phenylobacterium</taxon>
    </lineage>
</organism>
<accession>B4RG67</accession>
<protein>
    <recommendedName>
        <fullName evidence="1">Ketol-acid reductoisomerase (NADP(+))</fullName>
        <shortName evidence="1">KARI</shortName>
        <ecNumber evidence="1">1.1.1.86</ecNumber>
    </recommendedName>
    <alternativeName>
        <fullName evidence="1">Acetohydroxy-acid isomeroreductase</fullName>
        <shortName evidence="1">AHIR</shortName>
    </alternativeName>
    <alternativeName>
        <fullName evidence="1">Alpha-keto-beta-hydroxylacyl reductoisomerase</fullName>
    </alternativeName>
    <alternativeName>
        <fullName evidence="1">Ketol-acid reductoisomerase type 1</fullName>
    </alternativeName>
    <alternativeName>
        <fullName evidence="1">Ketol-acid reductoisomerase type I</fullName>
    </alternativeName>
</protein>